<reference key="1">
    <citation type="journal article" date="2003" name="Proc. Natl. Acad. Sci. U.S.A.">
        <title>Reductive genome evolution in Buchnera aphidicola.</title>
        <authorList>
            <person name="van Ham R.C.H.J."/>
            <person name="Kamerbeek J."/>
            <person name="Palacios C."/>
            <person name="Rausell C."/>
            <person name="Abascal F."/>
            <person name="Bastolla U."/>
            <person name="Fernandez J.M."/>
            <person name="Jimenez L."/>
            <person name="Postigo M."/>
            <person name="Silva F.J."/>
            <person name="Tamames J."/>
            <person name="Viguera E."/>
            <person name="Latorre A."/>
            <person name="Valencia A."/>
            <person name="Moran F."/>
            <person name="Moya A."/>
        </authorList>
    </citation>
    <scope>NUCLEOTIDE SEQUENCE [LARGE SCALE GENOMIC DNA]</scope>
    <source>
        <strain>Bp</strain>
    </source>
</reference>
<keyword id="KW-0028">Amino-acid biosynthesis</keyword>
<keyword id="KW-0055">Arginine biosynthesis</keyword>
<keyword id="KW-0067">ATP-binding</keyword>
<keyword id="KW-0963">Cytoplasm</keyword>
<keyword id="KW-0436">Ligase</keyword>
<keyword id="KW-0547">Nucleotide-binding</keyword>
<keyword id="KW-1185">Reference proteome</keyword>
<feature type="chain" id="PRO_0000148578" description="Argininosuccinate synthase">
    <location>
        <begin position="1"/>
        <end position="409"/>
    </location>
</feature>
<feature type="binding site" evidence="1">
    <location>
        <begin position="12"/>
        <end position="20"/>
    </location>
    <ligand>
        <name>ATP</name>
        <dbReference type="ChEBI" id="CHEBI:30616"/>
    </ligand>
</feature>
<feature type="binding site" evidence="1">
    <location>
        <position position="39"/>
    </location>
    <ligand>
        <name>ATP</name>
        <dbReference type="ChEBI" id="CHEBI:30616"/>
    </ligand>
</feature>
<feature type="binding site" evidence="1">
    <location>
        <position position="91"/>
    </location>
    <ligand>
        <name>L-citrulline</name>
        <dbReference type="ChEBI" id="CHEBI:57743"/>
    </ligand>
</feature>
<feature type="binding site" evidence="1">
    <location>
        <position position="121"/>
    </location>
    <ligand>
        <name>ATP</name>
        <dbReference type="ChEBI" id="CHEBI:30616"/>
    </ligand>
</feature>
<feature type="binding site" evidence="1">
    <location>
        <position position="123"/>
    </location>
    <ligand>
        <name>L-aspartate</name>
        <dbReference type="ChEBI" id="CHEBI:29991"/>
    </ligand>
</feature>
<feature type="binding site" evidence="1">
    <location>
        <position position="127"/>
    </location>
    <ligand>
        <name>L-aspartate</name>
        <dbReference type="ChEBI" id="CHEBI:29991"/>
    </ligand>
</feature>
<feature type="binding site" evidence="1">
    <location>
        <position position="127"/>
    </location>
    <ligand>
        <name>L-citrulline</name>
        <dbReference type="ChEBI" id="CHEBI:57743"/>
    </ligand>
</feature>
<feature type="binding site" evidence="1">
    <location>
        <position position="128"/>
    </location>
    <ligand>
        <name>L-aspartate</name>
        <dbReference type="ChEBI" id="CHEBI:29991"/>
    </ligand>
</feature>
<feature type="binding site" evidence="1">
    <location>
        <position position="131"/>
    </location>
    <ligand>
        <name>L-citrulline</name>
        <dbReference type="ChEBI" id="CHEBI:57743"/>
    </ligand>
</feature>
<feature type="binding site" evidence="1">
    <location>
        <position position="180"/>
    </location>
    <ligand>
        <name>L-citrulline</name>
        <dbReference type="ChEBI" id="CHEBI:57743"/>
    </ligand>
</feature>
<feature type="binding site" evidence="1">
    <location>
        <position position="189"/>
    </location>
    <ligand>
        <name>L-citrulline</name>
        <dbReference type="ChEBI" id="CHEBI:57743"/>
    </ligand>
</feature>
<feature type="binding site" evidence="1">
    <location>
        <position position="265"/>
    </location>
    <ligand>
        <name>L-citrulline</name>
        <dbReference type="ChEBI" id="CHEBI:57743"/>
    </ligand>
</feature>
<feature type="binding site" evidence="1">
    <location>
        <position position="277"/>
    </location>
    <ligand>
        <name>L-citrulline</name>
        <dbReference type="ChEBI" id="CHEBI:57743"/>
    </ligand>
</feature>
<gene>
    <name evidence="1" type="primary">argG</name>
    <name type="ordered locus">bbp_048</name>
</gene>
<evidence type="ECO:0000255" key="1">
    <source>
        <dbReference type="HAMAP-Rule" id="MF_00005"/>
    </source>
</evidence>
<organism>
    <name type="scientific">Buchnera aphidicola subsp. Baizongia pistaciae (strain Bp)</name>
    <dbReference type="NCBI Taxonomy" id="224915"/>
    <lineage>
        <taxon>Bacteria</taxon>
        <taxon>Pseudomonadati</taxon>
        <taxon>Pseudomonadota</taxon>
        <taxon>Gammaproteobacteria</taxon>
        <taxon>Enterobacterales</taxon>
        <taxon>Erwiniaceae</taxon>
        <taxon>Buchnera</taxon>
    </lineage>
</organism>
<comment type="catalytic activity">
    <reaction evidence="1">
        <text>L-citrulline + L-aspartate + ATP = 2-(N(omega)-L-arginino)succinate + AMP + diphosphate + H(+)</text>
        <dbReference type="Rhea" id="RHEA:10932"/>
        <dbReference type="ChEBI" id="CHEBI:15378"/>
        <dbReference type="ChEBI" id="CHEBI:29991"/>
        <dbReference type="ChEBI" id="CHEBI:30616"/>
        <dbReference type="ChEBI" id="CHEBI:33019"/>
        <dbReference type="ChEBI" id="CHEBI:57472"/>
        <dbReference type="ChEBI" id="CHEBI:57743"/>
        <dbReference type="ChEBI" id="CHEBI:456215"/>
        <dbReference type="EC" id="6.3.4.5"/>
    </reaction>
</comment>
<comment type="pathway">
    <text evidence="1">Amino-acid biosynthesis; L-arginine biosynthesis; L-arginine from L-ornithine and carbamoyl phosphate: step 2/3.</text>
</comment>
<comment type="subunit">
    <text evidence="1">Homotetramer.</text>
</comment>
<comment type="subcellular location">
    <subcellularLocation>
        <location evidence="1">Cytoplasm</location>
    </subcellularLocation>
</comment>
<comment type="similarity">
    <text evidence="1">Belongs to the argininosuccinate synthase family. Type 1 subfamily.</text>
</comment>
<protein>
    <recommendedName>
        <fullName evidence="1">Argininosuccinate synthase</fullName>
        <ecNumber evidence="1">6.3.4.5</ecNumber>
    </recommendedName>
    <alternativeName>
        <fullName evidence="1">Citrulline--aspartate ligase</fullName>
    </alternativeName>
</protein>
<accession>P59412</accession>
<sequence length="409" mass="46032">MRNKNIKKVVLAYSGGLDTSAIIPWIKENYSSEVIAFVANVGQNQADLKDIEYKALKSGASQCIIKDLREEFIRDYVYPVLKSGALYEENYLLGTALARPIIAKSQVDLALKLKADGVCHGATGKGNDQVRFETAYVGLAPELKIIAPWREWSFKSRGELLSYLKEKNVKTTASIEKIYSKDENAWHVSTEGGVLEDLWNKPNQDCWTWTNDPKDAPNVPEIISIKIKNGSVIAVNNEFLSPFKCLEKLNLVGIKHGIGRIDVVENRLVGMKSRACYETPGGTILVNALRSLEQLVLDRDSYKWRQQIALEMSYVIYNGNWFSPFRKSLQAAATELATEIDGEVILELYKGTVTAIRKFSPNSLYSKEFATFDQDEVYRQSDADGFIKLYSLPSKIRAINKCMNKALMK</sequence>
<dbReference type="EC" id="6.3.4.5" evidence="1"/>
<dbReference type="EMBL" id="AE016826">
    <property type="protein sequence ID" value="AAO26787.1"/>
    <property type="molecule type" value="Genomic_DNA"/>
</dbReference>
<dbReference type="RefSeq" id="WP_011091188.1">
    <property type="nucleotide sequence ID" value="NC_004545.1"/>
</dbReference>
<dbReference type="SMR" id="P59412"/>
<dbReference type="STRING" id="224915.bbp_048"/>
<dbReference type="KEGG" id="bab:bbp_048"/>
<dbReference type="eggNOG" id="COG0137">
    <property type="taxonomic scope" value="Bacteria"/>
</dbReference>
<dbReference type="HOGENOM" id="CLU_032784_4_2_6"/>
<dbReference type="OrthoDB" id="9801641at2"/>
<dbReference type="UniPathway" id="UPA00068">
    <property type="reaction ID" value="UER00113"/>
</dbReference>
<dbReference type="Proteomes" id="UP000000601">
    <property type="component" value="Chromosome"/>
</dbReference>
<dbReference type="GO" id="GO:0005737">
    <property type="term" value="C:cytoplasm"/>
    <property type="evidence" value="ECO:0007669"/>
    <property type="project" value="UniProtKB-SubCell"/>
</dbReference>
<dbReference type="GO" id="GO:0004055">
    <property type="term" value="F:argininosuccinate synthase activity"/>
    <property type="evidence" value="ECO:0007669"/>
    <property type="project" value="UniProtKB-UniRule"/>
</dbReference>
<dbReference type="GO" id="GO:0005524">
    <property type="term" value="F:ATP binding"/>
    <property type="evidence" value="ECO:0007669"/>
    <property type="project" value="UniProtKB-UniRule"/>
</dbReference>
<dbReference type="GO" id="GO:0000053">
    <property type="term" value="P:argininosuccinate metabolic process"/>
    <property type="evidence" value="ECO:0007669"/>
    <property type="project" value="TreeGrafter"/>
</dbReference>
<dbReference type="GO" id="GO:0006526">
    <property type="term" value="P:L-arginine biosynthetic process"/>
    <property type="evidence" value="ECO:0007669"/>
    <property type="project" value="UniProtKB-UniRule"/>
</dbReference>
<dbReference type="GO" id="GO:0000050">
    <property type="term" value="P:urea cycle"/>
    <property type="evidence" value="ECO:0007669"/>
    <property type="project" value="TreeGrafter"/>
</dbReference>
<dbReference type="CDD" id="cd01999">
    <property type="entry name" value="ASS"/>
    <property type="match status" value="1"/>
</dbReference>
<dbReference type="FunFam" id="3.40.50.620:FF:000019">
    <property type="entry name" value="Argininosuccinate synthase"/>
    <property type="match status" value="1"/>
</dbReference>
<dbReference type="FunFam" id="3.90.1260.10:FF:000007">
    <property type="entry name" value="Argininosuccinate synthase"/>
    <property type="match status" value="1"/>
</dbReference>
<dbReference type="Gene3D" id="3.90.1260.10">
    <property type="entry name" value="Argininosuccinate synthetase, chain A, domain 2"/>
    <property type="match status" value="1"/>
</dbReference>
<dbReference type="Gene3D" id="3.40.50.620">
    <property type="entry name" value="HUPs"/>
    <property type="match status" value="1"/>
</dbReference>
<dbReference type="Gene3D" id="1.20.5.470">
    <property type="entry name" value="Single helix bin"/>
    <property type="match status" value="1"/>
</dbReference>
<dbReference type="HAMAP" id="MF_00005">
    <property type="entry name" value="Arg_succ_synth_type1"/>
    <property type="match status" value="1"/>
</dbReference>
<dbReference type="InterPro" id="IPR048268">
    <property type="entry name" value="Arginosuc_syn_C"/>
</dbReference>
<dbReference type="InterPro" id="IPR048267">
    <property type="entry name" value="Arginosuc_syn_N"/>
</dbReference>
<dbReference type="InterPro" id="IPR001518">
    <property type="entry name" value="Arginosuc_synth"/>
</dbReference>
<dbReference type="InterPro" id="IPR018223">
    <property type="entry name" value="Arginosuc_synth_CS"/>
</dbReference>
<dbReference type="InterPro" id="IPR023434">
    <property type="entry name" value="Arginosuc_synth_type_1_subfam"/>
</dbReference>
<dbReference type="InterPro" id="IPR024074">
    <property type="entry name" value="AS_cat/multimer_dom_body"/>
</dbReference>
<dbReference type="InterPro" id="IPR014729">
    <property type="entry name" value="Rossmann-like_a/b/a_fold"/>
</dbReference>
<dbReference type="NCBIfam" id="TIGR00032">
    <property type="entry name" value="argG"/>
    <property type="match status" value="1"/>
</dbReference>
<dbReference type="NCBIfam" id="NF001770">
    <property type="entry name" value="PRK00509.1"/>
    <property type="match status" value="1"/>
</dbReference>
<dbReference type="PANTHER" id="PTHR11587">
    <property type="entry name" value="ARGININOSUCCINATE SYNTHASE"/>
    <property type="match status" value="1"/>
</dbReference>
<dbReference type="PANTHER" id="PTHR11587:SF2">
    <property type="entry name" value="ARGININOSUCCINATE SYNTHASE"/>
    <property type="match status" value="1"/>
</dbReference>
<dbReference type="Pfam" id="PF20979">
    <property type="entry name" value="Arginosuc_syn_C"/>
    <property type="match status" value="1"/>
</dbReference>
<dbReference type="Pfam" id="PF00764">
    <property type="entry name" value="Arginosuc_synth"/>
    <property type="match status" value="1"/>
</dbReference>
<dbReference type="SUPFAM" id="SSF52402">
    <property type="entry name" value="Adenine nucleotide alpha hydrolases-like"/>
    <property type="match status" value="1"/>
</dbReference>
<dbReference type="SUPFAM" id="SSF69864">
    <property type="entry name" value="Argininosuccinate synthetase, C-terminal domain"/>
    <property type="match status" value="1"/>
</dbReference>
<dbReference type="PROSITE" id="PS00564">
    <property type="entry name" value="ARGININOSUCCIN_SYN_1"/>
    <property type="match status" value="1"/>
</dbReference>
<dbReference type="PROSITE" id="PS00565">
    <property type="entry name" value="ARGININOSUCCIN_SYN_2"/>
    <property type="match status" value="1"/>
</dbReference>
<proteinExistence type="inferred from homology"/>
<name>ASSY_BUCBP</name>